<sequence>MGSKNKLRRFKENEKFENVIQPSREELTDNVFELKGKWSENFFKNDHPIVLELGCGKGEYTVELARKNPDKNFIGIDIKGARFWRGAKTALEEGLDNVAFIRTQIELIEYVFATNEVSEIWITFPDPQIKYKRTKHRLTNTDFLQRYKNVLKQDGIMHLKTDSEFMHGYTLGLLHGEGHEILYAHHDIYKNEYSPKEVTGIQTFYENQYLENGKPITYIRFKIK</sequence>
<evidence type="ECO:0000250" key="1"/>
<evidence type="ECO:0000255" key="2">
    <source>
        <dbReference type="HAMAP-Rule" id="MF_01057"/>
    </source>
</evidence>
<protein>
    <recommendedName>
        <fullName evidence="2">tRNA (guanine-N(7)-)-methyltransferase</fullName>
        <ecNumber evidence="2">2.1.1.33</ecNumber>
    </recommendedName>
    <alternativeName>
        <fullName evidence="2">tRNA (guanine(46)-N(7))-methyltransferase</fullName>
    </alternativeName>
    <alternativeName>
        <fullName evidence="2">tRNA(m7G46)-methyltransferase</fullName>
    </alternativeName>
</protein>
<proteinExistence type="inferred from homology"/>
<gene>
    <name evidence="2" type="primary">trmB</name>
    <name type="ordered locus">GFO_0120</name>
</gene>
<name>TRMB_CHRFK</name>
<comment type="function">
    <text evidence="2">Catalyzes the formation of N(7)-methylguanine at position 46 (m7G46) in tRNA.</text>
</comment>
<comment type="catalytic activity">
    <reaction evidence="2">
        <text>guanosine(46) in tRNA + S-adenosyl-L-methionine = N(7)-methylguanosine(46) in tRNA + S-adenosyl-L-homocysteine</text>
        <dbReference type="Rhea" id="RHEA:42708"/>
        <dbReference type="Rhea" id="RHEA-COMP:10188"/>
        <dbReference type="Rhea" id="RHEA-COMP:10189"/>
        <dbReference type="ChEBI" id="CHEBI:57856"/>
        <dbReference type="ChEBI" id="CHEBI:59789"/>
        <dbReference type="ChEBI" id="CHEBI:74269"/>
        <dbReference type="ChEBI" id="CHEBI:74480"/>
        <dbReference type="EC" id="2.1.1.33"/>
    </reaction>
</comment>
<comment type="pathway">
    <text evidence="2">tRNA modification; N(7)-methylguanine-tRNA biosynthesis.</text>
</comment>
<comment type="similarity">
    <text evidence="2">Belongs to the class I-like SAM-binding methyltransferase superfamily. TrmB family.</text>
</comment>
<accession>A0LXL4</accession>
<reference key="1">
    <citation type="journal article" date="2006" name="Environ. Microbiol.">
        <title>Whole genome analysis of the marine Bacteroidetes'Gramella forsetii' reveals adaptations to degradation of polymeric organic matter.</title>
        <authorList>
            <person name="Bauer M."/>
            <person name="Kube M."/>
            <person name="Teeling H."/>
            <person name="Richter M."/>
            <person name="Lombardot T."/>
            <person name="Allers E."/>
            <person name="Wuerdemann C.A."/>
            <person name="Quast C."/>
            <person name="Kuhl H."/>
            <person name="Knaust F."/>
            <person name="Woebken D."/>
            <person name="Bischof K."/>
            <person name="Mussmann M."/>
            <person name="Choudhuri J.V."/>
            <person name="Meyer F."/>
            <person name="Reinhardt R."/>
            <person name="Amann R.I."/>
            <person name="Gloeckner F.O."/>
        </authorList>
    </citation>
    <scope>NUCLEOTIDE SEQUENCE [LARGE SCALE GENOMIC DNA]</scope>
    <source>
        <strain>DSM 17595 / CGMCC 1.15422 / KT0803</strain>
    </source>
</reference>
<dbReference type="EC" id="2.1.1.33" evidence="2"/>
<dbReference type="EMBL" id="CU207366">
    <property type="protein sequence ID" value="CAL65109.1"/>
    <property type="molecule type" value="Genomic_DNA"/>
</dbReference>
<dbReference type="RefSeq" id="WP_011708047.1">
    <property type="nucleotide sequence ID" value="NC_008571.1"/>
</dbReference>
<dbReference type="SMR" id="A0LXL4"/>
<dbReference type="STRING" id="411154.GFO_0120"/>
<dbReference type="KEGG" id="gfo:GFO_0120"/>
<dbReference type="eggNOG" id="COG0220">
    <property type="taxonomic scope" value="Bacteria"/>
</dbReference>
<dbReference type="HOGENOM" id="CLU_050910_2_2_10"/>
<dbReference type="OrthoDB" id="9802090at2"/>
<dbReference type="UniPathway" id="UPA00989"/>
<dbReference type="Proteomes" id="UP000000755">
    <property type="component" value="Chromosome"/>
</dbReference>
<dbReference type="GO" id="GO:0043527">
    <property type="term" value="C:tRNA methyltransferase complex"/>
    <property type="evidence" value="ECO:0007669"/>
    <property type="project" value="TreeGrafter"/>
</dbReference>
<dbReference type="GO" id="GO:0008176">
    <property type="term" value="F:tRNA (guanine(46)-N7)-methyltransferase activity"/>
    <property type="evidence" value="ECO:0007669"/>
    <property type="project" value="UniProtKB-UniRule"/>
</dbReference>
<dbReference type="CDD" id="cd02440">
    <property type="entry name" value="AdoMet_MTases"/>
    <property type="match status" value="1"/>
</dbReference>
<dbReference type="Gene3D" id="3.40.50.150">
    <property type="entry name" value="Vaccinia Virus protein VP39"/>
    <property type="match status" value="1"/>
</dbReference>
<dbReference type="HAMAP" id="MF_01057">
    <property type="entry name" value="tRNA_methyltr_TrmB"/>
    <property type="match status" value="1"/>
</dbReference>
<dbReference type="InterPro" id="IPR029063">
    <property type="entry name" value="SAM-dependent_MTases_sf"/>
</dbReference>
<dbReference type="InterPro" id="IPR003358">
    <property type="entry name" value="tRNA_(Gua-N-7)_MeTrfase_Trmb"/>
</dbReference>
<dbReference type="InterPro" id="IPR055361">
    <property type="entry name" value="tRNA_methyltr_TrmB_bact"/>
</dbReference>
<dbReference type="NCBIfam" id="NF001080">
    <property type="entry name" value="PRK00121.2-2"/>
    <property type="match status" value="1"/>
</dbReference>
<dbReference type="NCBIfam" id="TIGR00091">
    <property type="entry name" value="tRNA (guanosine(46)-N7)-methyltransferase TrmB"/>
    <property type="match status" value="1"/>
</dbReference>
<dbReference type="PANTHER" id="PTHR23417">
    <property type="entry name" value="3-DEOXY-D-MANNO-OCTULOSONIC-ACID TRANSFERASE/TRNA GUANINE-N 7 - -METHYLTRANSFERASE"/>
    <property type="match status" value="1"/>
</dbReference>
<dbReference type="PANTHER" id="PTHR23417:SF14">
    <property type="entry name" value="PENTACOTRIPEPTIDE-REPEAT REGION OF PRORP DOMAIN-CONTAINING PROTEIN"/>
    <property type="match status" value="1"/>
</dbReference>
<dbReference type="Pfam" id="PF02390">
    <property type="entry name" value="Methyltransf_4"/>
    <property type="match status" value="1"/>
</dbReference>
<dbReference type="SUPFAM" id="SSF53335">
    <property type="entry name" value="S-adenosyl-L-methionine-dependent methyltransferases"/>
    <property type="match status" value="1"/>
</dbReference>
<dbReference type="PROSITE" id="PS51625">
    <property type="entry name" value="SAM_MT_TRMB"/>
    <property type="match status" value="1"/>
</dbReference>
<organism>
    <name type="scientific">Christiangramia forsetii (strain DSM 17595 / CGMCC 1.15422 / KT0803)</name>
    <name type="common">Gramella forsetii</name>
    <dbReference type="NCBI Taxonomy" id="411154"/>
    <lineage>
        <taxon>Bacteria</taxon>
        <taxon>Pseudomonadati</taxon>
        <taxon>Bacteroidota</taxon>
        <taxon>Flavobacteriia</taxon>
        <taxon>Flavobacteriales</taxon>
        <taxon>Flavobacteriaceae</taxon>
        <taxon>Christiangramia</taxon>
    </lineage>
</organism>
<feature type="chain" id="PRO_0000288152" description="tRNA (guanine-N(7)-)-methyltransferase">
    <location>
        <begin position="1"/>
        <end position="224"/>
    </location>
</feature>
<feature type="active site" evidence="1">
    <location>
        <position position="126"/>
    </location>
</feature>
<feature type="binding site" evidence="2">
    <location>
        <position position="52"/>
    </location>
    <ligand>
        <name>S-adenosyl-L-methionine</name>
        <dbReference type="ChEBI" id="CHEBI:59789"/>
    </ligand>
</feature>
<feature type="binding site" evidence="2">
    <location>
        <position position="77"/>
    </location>
    <ligand>
        <name>S-adenosyl-L-methionine</name>
        <dbReference type="ChEBI" id="CHEBI:59789"/>
    </ligand>
</feature>
<feature type="binding site" evidence="2">
    <location>
        <position position="126"/>
    </location>
    <ligand>
        <name>S-adenosyl-L-methionine</name>
        <dbReference type="ChEBI" id="CHEBI:59789"/>
    </ligand>
</feature>
<feature type="binding site" evidence="2">
    <location>
        <position position="130"/>
    </location>
    <ligand>
        <name>substrate</name>
    </ligand>
</feature>
<feature type="binding site" evidence="2">
    <location>
        <position position="162"/>
    </location>
    <ligand>
        <name>substrate</name>
    </ligand>
</feature>
<keyword id="KW-0489">Methyltransferase</keyword>
<keyword id="KW-0949">S-adenosyl-L-methionine</keyword>
<keyword id="KW-0808">Transferase</keyword>
<keyword id="KW-0819">tRNA processing</keyword>